<protein>
    <recommendedName>
        <fullName>Putative methyltransferase MJ0046</fullName>
        <ecNumber>2.1.1.-</ecNumber>
    </recommendedName>
</protein>
<evidence type="ECO:0000305" key="1"/>
<reference key="1">
    <citation type="journal article" date="1996" name="Science">
        <title>Complete genome sequence of the methanogenic archaeon, Methanococcus jannaschii.</title>
        <authorList>
            <person name="Bult C.J."/>
            <person name="White O."/>
            <person name="Olsen G.J."/>
            <person name="Zhou L."/>
            <person name="Fleischmann R.D."/>
            <person name="Sutton G.G."/>
            <person name="Blake J.A."/>
            <person name="FitzGerald L.M."/>
            <person name="Clayton R.A."/>
            <person name="Gocayne J.D."/>
            <person name="Kerlavage A.R."/>
            <person name="Dougherty B.A."/>
            <person name="Tomb J.-F."/>
            <person name="Adams M.D."/>
            <person name="Reich C.I."/>
            <person name="Overbeek R."/>
            <person name="Kirkness E.F."/>
            <person name="Weinstock K.G."/>
            <person name="Merrick J.M."/>
            <person name="Glodek A."/>
            <person name="Scott J.L."/>
            <person name="Geoghagen N.S.M."/>
            <person name="Weidman J.F."/>
            <person name="Fuhrmann J.L."/>
            <person name="Nguyen D."/>
            <person name="Utterback T.R."/>
            <person name="Kelley J.M."/>
            <person name="Peterson J.D."/>
            <person name="Sadow P.W."/>
            <person name="Hanna M.C."/>
            <person name="Cotton M.D."/>
            <person name="Roberts K.M."/>
            <person name="Hurst M.A."/>
            <person name="Kaine B.P."/>
            <person name="Borodovsky M."/>
            <person name="Klenk H.-P."/>
            <person name="Fraser C.M."/>
            <person name="Smith H.O."/>
            <person name="Woese C.R."/>
            <person name="Venter J.C."/>
        </authorList>
    </citation>
    <scope>NUCLEOTIDE SEQUENCE [LARGE SCALE GENOMIC DNA]</scope>
    <source>
        <strain>ATCC 43067 / DSM 2661 / JAL-1 / JCM 10045 / NBRC 100440</strain>
    </source>
</reference>
<accession>Q60354</accession>
<proteinExistence type="inferred from homology"/>
<sequence length="261" mass="29931">MLGLKIEDAIKYNEKLKKYVYKKGDKLRINFKDKEALIEYNKTVLKVLFDLDIEFHKNGLIPTPINRYLFIKSTFETLKELGIEKPTVLEIGTGHSAIISLLIKKFYNAEVYATEVDEEFIDFAKRNIEKNKLDIKIINSKGRAIEGIEELKDKKFDLIISYPPFYSKNSVASGRKFGGALAKNVELIGGGKFGEEFSFKIIEEGINFLNKKGVISLMMPKKPEKRRELIIKKMKEVGLDVEVDEIKTGNRLRYIIKGIKG</sequence>
<keyword id="KW-0489">Methyltransferase</keyword>
<keyword id="KW-1185">Reference proteome</keyword>
<keyword id="KW-0808">Transferase</keyword>
<comment type="similarity">
    <text evidence="1">Belongs to the methyltransferase superfamily.</text>
</comment>
<name>Y046_METJA</name>
<dbReference type="EC" id="2.1.1.-"/>
<dbReference type="EMBL" id="L77117">
    <property type="protein sequence ID" value="AAB98026.1"/>
    <property type="molecule type" value="Genomic_DNA"/>
</dbReference>
<dbReference type="PIR" id="F64305">
    <property type="entry name" value="F64305"/>
</dbReference>
<dbReference type="RefSeq" id="WP_010869537.1">
    <property type="nucleotide sequence ID" value="NC_000909.1"/>
</dbReference>
<dbReference type="SMR" id="Q60354"/>
<dbReference type="FunCoup" id="Q60354">
    <property type="interactions" value="6"/>
</dbReference>
<dbReference type="STRING" id="243232.MJ_0046"/>
<dbReference type="PaxDb" id="243232-MJ_0046"/>
<dbReference type="EnsemblBacteria" id="AAB98026">
    <property type="protein sequence ID" value="AAB98026"/>
    <property type="gene ID" value="MJ_0046"/>
</dbReference>
<dbReference type="GeneID" id="1450884"/>
<dbReference type="KEGG" id="mja:MJ_0046"/>
<dbReference type="eggNOG" id="arCOG00111">
    <property type="taxonomic scope" value="Archaea"/>
</dbReference>
<dbReference type="HOGENOM" id="CLU_071987_0_0_2"/>
<dbReference type="InParanoid" id="Q60354"/>
<dbReference type="OrthoDB" id="30774at2157"/>
<dbReference type="PhylomeDB" id="Q60354"/>
<dbReference type="Proteomes" id="UP000000805">
    <property type="component" value="Chromosome"/>
</dbReference>
<dbReference type="GO" id="GO:0052907">
    <property type="term" value="F:23S rRNA (adenine(1618)-N(6))-methyltransferase activity"/>
    <property type="evidence" value="ECO:0000318"/>
    <property type="project" value="GO_Central"/>
</dbReference>
<dbReference type="GO" id="GO:0070475">
    <property type="term" value="P:rRNA base methylation"/>
    <property type="evidence" value="ECO:0000318"/>
    <property type="project" value="GO_Central"/>
</dbReference>
<dbReference type="CDD" id="cd02440">
    <property type="entry name" value="AdoMet_MTases"/>
    <property type="match status" value="1"/>
</dbReference>
<dbReference type="Gene3D" id="3.40.50.150">
    <property type="entry name" value="Vaccinia Virus protein VP39"/>
    <property type="match status" value="1"/>
</dbReference>
<dbReference type="InterPro" id="IPR010286">
    <property type="entry name" value="METTL16/RlmF"/>
</dbReference>
<dbReference type="InterPro" id="IPR029063">
    <property type="entry name" value="SAM-dependent_MTases_sf"/>
</dbReference>
<dbReference type="PANTHER" id="PTHR13393:SF0">
    <property type="entry name" value="RNA N6-ADENOSINE-METHYLTRANSFERASE METTL16"/>
    <property type="match status" value="1"/>
</dbReference>
<dbReference type="PANTHER" id="PTHR13393">
    <property type="entry name" value="SAM-DEPENDENT METHYLTRANSFERASE"/>
    <property type="match status" value="1"/>
</dbReference>
<dbReference type="Pfam" id="PF05971">
    <property type="entry name" value="Methyltransf_10"/>
    <property type="match status" value="1"/>
</dbReference>
<dbReference type="SUPFAM" id="SSF53335">
    <property type="entry name" value="S-adenosyl-L-methionine-dependent methyltransferases"/>
    <property type="match status" value="1"/>
</dbReference>
<feature type="chain" id="PRO_0000218022" description="Putative methyltransferase MJ0046">
    <location>
        <begin position="1"/>
        <end position="261"/>
    </location>
</feature>
<organism>
    <name type="scientific">Methanocaldococcus jannaschii (strain ATCC 43067 / DSM 2661 / JAL-1 / JCM 10045 / NBRC 100440)</name>
    <name type="common">Methanococcus jannaschii</name>
    <dbReference type="NCBI Taxonomy" id="243232"/>
    <lineage>
        <taxon>Archaea</taxon>
        <taxon>Methanobacteriati</taxon>
        <taxon>Methanobacteriota</taxon>
        <taxon>Methanomada group</taxon>
        <taxon>Methanococci</taxon>
        <taxon>Methanococcales</taxon>
        <taxon>Methanocaldococcaceae</taxon>
        <taxon>Methanocaldococcus</taxon>
    </lineage>
</organism>
<gene>
    <name type="ordered locus">MJ0046</name>
</gene>